<gene>
    <name evidence="1" type="primary">glyA</name>
    <name type="ordered locus">Bd2007</name>
</gene>
<comment type="function">
    <text evidence="1">Catalyzes the reversible interconversion of serine and glycine with tetrahydrofolate (THF) serving as the one-carbon carrier. This reaction serves as the major source of one-carbon groups required for the biosynthesis of purines, thymidylate, methionine, and other important biomolecules. Also exhibits THF-independent aldolase activity toward beta-hydroxyamino acids, producing glycine and aldehydes, via a retro-aldol mechanism.</text>
</comment>
<comment type="catalytic activity">
    <reaction evidence="1">
        <text>(6R)-5,10-methylene-5,6,7,8-tetrahydrofolate + glycine + H2O = (6S)-5,6,7,8-tetrahydrofolate + L-serine</text>
        <dbReference type="Rhea" id="RHEA:15481"/>
        <dbReference type="ChEBI" id="CHEBI:15377"/>
        <dbReference type="ChEBI" id="CHEBI:15636"/>
        <dbReference type="ChEBI" id="CHEBI:33384"/>
        <dbReference type="ChEBI" id="CHEBI:57305"/>
        <dbReference type="ChEBI" id="CHEBI:57453"/>
        <dbReference type="EC" id="2.1.2.1"/>
    </reaction>
</comment>
<comment type="cofactor">
    <cofactor evidence="1">
        <name>pyridoxal 5'-phosphate</name>
        <dbReference type="ChEBI" id="CHEBI:597326"/>
    </cofactor>
</comment>
<comment type="pathway">
    <text evidence="1">One-carbon metabolism; tetrahydrofolate interconversion.</text>
</comment>
<comment type="pathway">
    <text evidence="1">Amino-acid biosynthesis; glycine biosynthesis; glycine from L-serine: step 1/1.</text>
</comment>
<comment type="subunit">
    <text evidence="1">Homodimer.</text>
</comment>
<comment type="subcellular location">
    <subcellularLocation>
        <location evidence="1">Cytoplasm</location>
    </subcellularLocation>
</comment>
<comment type="similarity">
    <text evidence="1">Belongs to the SHMT family.</text>
</comment>
<accession>Q6MLK1</accession>
<name>GLYA_BDEBA</name>
<dbReference type="EC" id="2.1.2.1" evidence="1"/>
<dbReference type="EMBL" id="BX842651">
    <property type="protein sequence ID" value="CAE79856.1"/>
    <property type="molecule type" value="Genomic_DNA"/>
</dbReference>
<dbReference type="RefSeq" id="WP_011164458.1">
    <property type="nucleotide sequence ID" value="NC_005363.1"/>
</dbReference>
<dbReference type="SMR" id="Q6MLK1"/>
<dbReference type="STRING" id="264462.Bd2007"/>
<dbReference type="GeneID" id="93012957"/>
<dbReference type="KEGG" id="bba:Bd2007"/>
<dbReference type="eggNOG" id="COG0112">
    <property type="taxonomic scope" value="Bacteria"/>
</dbReference>
<dbReference type="HOGENOM" id="CLU_022477_2_1_7"/>
<dbReference type="UniPathway" id="UPA00193"/>
<dbReference type="UniPathway" id="UPA00288">
    <property type="reaction ID" value="UER01023"/>
</dbReference>
<dbReference type="Proteomes" id="UP000008080">
    <property type="component" value="Chromosome"/>
</dbReference>
<dbReference type="GO" id="GO:0005829">
    <property type="term" value="C:cytosol"/>
    <property type="evidence" value="ECO:0007669"/>
    <property type="project" value="TreeGrafter"/>
</dbReference>
<dbReference type="GO" id="GO:0004372">
    <property type="term" value="F:glycine hydroxymethyltransferase activity"/>
    <property type="evidence" value="ECO:0007669"/>
    <property type="project" value="UniProtKB-UniRule"/>
</dbReference>
<dbReference type="GO" id="GO:0030170">
    <property type="term" value="F:pyridoxal phosphate binding"/>
    <property type="evidence" value="ECO:0007669"/>
    <property type="project" value="UniProtKB-UniRule"/>
</dbReference>
<dbReference type="GO" id="GO:0019264">
    <property type="term" value="P:glycine biosynthetic process from serine"/>
    <property type="evidence" value="ECO:0007669"/>
    <property type="project" value="UniProtKB-UniRule"/>
</dbReference>
<dbReference type="GO" id="GO:0035999">
    <property type="term" value="P:tetrahydrofolate interconversion"/>
    <property type="evidence" value="ECO:0007669"/>
    <property type="project" value="UniProtKB-UniRule"/>
</dbReference>
<dbReference type="CDD" id="cd00378">
    <property type="entry name" value="SHMT"/>
    <property type="match status" value="1"/>
</dbReference>
<dbReference type="FunFam" id="3.40.640.10:FF:000001">
    <property type="entry name" value="Serine hydroxymethyltransferase"/>
    <property type="match status" value="1"/>
</dbReference>
<dbReference type="FunFam" id="3.90.1150.10:FF:000003">
    <property type="entry name" value="Serine hydroxymethyltransferase"/>
    <property type="match status" value="1"/>
</dbReference>
<dbReference type="Gene3D" id="3.90.1150.10">
    <property type="entry name" value="Aspartate Aminotransferase, domain 1"/>
    <property type="match status" value="1"/>
</dbReference>
<dbReference type="Gene3D" id="3.40.640.10">
    <property type="entry name" value="Type I PLP-dependent aspartate aminotransferase-like (Major domain)"/>
    <property type="match status" value="1"/>
</dbReference>
<dbReference type="HAMAP" id="MF_00051">
    <property type="entry name" value="SHMT"/>
    <property type="match status" value="1"/>
</dbReference>
<dbReference type="InterPro" id="IPR015424">
    <property type="entry name" value="PyrdxlP-dep_Trfase"/>
</dbReference>
<dbReference type="InterPro" id="IPR015421">
    <property type="entry name" value="PyrdxlP-dep_Trfase_major"/>
</dbReference>
<dbReference type="InterPro" id="IPR015422">
    <property type="entry name" value="PyrdxlP-dep_Trfase_small"/>
</dbReference>
<dbReference type="InterPro" id="IPR001085">
    <property type="entry name" value="Ser_HO-MeTrfase"/>
</dbReference>
<dbReference type="InterPro" id="IPR049943">
    <property type="entry name" value="Ser_HO-MeTrfase-like"/>
</dbReference>
<dbReference type="InterPro" id="IPR019798">
    <property type="entry name" value="Ser_HO-MeTrfase_PLP_BS"/>
</dbReference>
<dbReference type="InterPro" id="IPR039429">
    <property type="entry name" value="SHMT-like_dom"/>
</dbReference>
<dbReference type="NCBIfam" id="NF000586">
    <property type="entry name" value="PRK00011.1"/>
    <property type="match status" value="1"/>
</dbReference>
<dbReference type="PANTHER" id="PTHR11680">
    <property type="entry name" value="SERINE HYDROXYMETHYLTRANSFERASE"/>
    <property type="match status" value="1"/>
</dbReference>
<dbReference type="PANTHER" id="PTHR11680:SF35">
    <property type="entry name" value="SERINE HYDROXYMETHYLTRANSFERASE 1"/>
    <property type="match status" value="1"/>
</dbReference>
<dbReference type="Pfam" id="PF00464">
    <property type="entry name" value="SHMT"/>
    <property type="match status" value="1"/>
</dbReference>
<dbReference type="PIRSF" id="PIRSF000412">
    <property type="entry name" value="SHMT"/>
    <property type="match status" value="1"/>
</dbReference>
<dbReference type="SUPFAM" id="SSF53383">
    <property type="entry name" value="PLP-dependent transferases"/>
    <property type="match status" value="1"/>
</dbReference>
<dbReference type="PROSITE" id="PS00096">
    <property type="entry name" value="SHMT"/>
    <property type="match status" value="1"/>
</dbReference>
<keyword id="KW-0028">Amino-acid biosynthesis</keyword>
<keyword id="KW-0963">Cytoplasm</keyword>
<keyword id="KW-0554">One-carbon metabolism</keyword>
<keyword id="KW-0663">Pyridoxal phosphate</keyword>
<keyword id="KW-1185">Reference proteome</keyword>
<keyword id="KW-0808">Transferase</keyword>
<evidence type="ECO:0000255" key="1">
    <source>
        <dbReference type="HAMAP-Rule" id="MF_00051"/>
    </source>
</evidence>
<feature type="chain" id="PRO_0000113536" description="Serine hydroxymethyltransferase">
    <location>
        <begin position="1"/>
        <end position="415"/>
    </location>
</feature>
<feature type="binding site" evidence="1">
    <location>
        <position position="121"/>
    </location>
    <ligand>
        <name>(6S)-5,6,7,8-tetrahydrofolate</name>
        <dbReference type="ChEBI" id="CHEBI:57453"/>
    </ligand>
</feature>
<feature type="binding site" evidence="1">
    <location>
        <begin position="125"/>
        <end position="127"/>
    </location>
    <ligand>
        <name>(6S)-5,6,7,8-tetrahydrofolate</name>
        <dbReference type="ChEBI" id="CHEBI:57453"/>
    </ligand>
</feature>
<feature type="binding site" evidence="1">
    <location>
        <position position="246"/>
    </location>
    <ligand>
        <name>(6S)-5,6,7,8-tetrahydrofolate</name>
        <dbReference type="ChEBI" id="CHEBI:57453"/>
    </ligand>
</feature>
<feature type="binding site" evidence="1">
    <location>
        <begin position="354"/>
        <end position="356"/>
    </location>
    <ligand>
        <name>(6S)-5,6,7,8-tetrahydrofolate</name>
        <dbReference type="ChEBI" id="CHEBI:57453"/>
    </ligand>
</feature>
<feature type="site" description="Plays an important role in substrate specificity" evidence="1">
    <location>
        <position position="229"/>
    </location>
</feature>
<feature type="modified residue" description="N6-(pyridoxal phosphate)lysine" evidence="1">
    <location>
        <position position="230"/>
    </location>
</feature>
<proteinExistence type="inferred from homology"/>
<protein>
    <recommendedName>
        <fullName evidence="1">Serine hydroxymethyltransferase</fullName>
        <shortName evidence="1">SHMT</shortName>
        <shortName evidence="1">Serine methylase</shortName>
        <ecNumber evidence="1">2.1.2.1</ecNumber>
    </recommendedName>
</protein>
<sequence length="415" mass="44773">MHSTSLSLAQVDPEILAAINKESERQQFGLEMIASENYTSKAVMEAQGSILTNKYAEGYPGKRYYGGCVNVDTVESLAIERAKKLFGVQYANVQPHSGSQANMGVYLAACKAGETILGMDLSHGGHLTHGSPVNFSGMLFKAASYKLDPETGRLNYDTIRATAKEVQPKLIIAGYSAYPRTLDFAKFKEIADEVGAQLLVDMAHFAGLVATGHHPSPVPYADYITTTTHKTLRGPRGGMILTNSEEKAKTMNSRIFPGIQGGPLEHVIAGKAVAFGEALKPEFKDYSGKVVSNAKVLAEELLSAGFKLVTGGTDNHLILVDLSDREITGKLAENSLDEAGITVNKNTVPNEKRSPFVTSGVRIGTPALTTRGMGPAEMKQIAKWIGQVLNNAEDAGVKNRVHEEVKELCKQFPIY</sequence>
<reference key="1">
    <citation type="journal article" date="2004" name="Science">
        <title>A predator unmasked: life cycle of Bdellovibrio bacteriovorus from a genomic perspective.</title>
        <authorList>
            <person name="Rendulic S."/>
            <person name="Jagtap P."/>
            <person name="Rosinus A."/>
            <person name="Eppinger M."/>
            <person name="Baar C."/>
            <person name="Lanz C."/>
            <person name="Keller H."/>
            <person name="Lambert C."/>
            <person name="Evans K.J."/>
            <person name="Goesmann A."/>
            <person name="Meyer F."/>
            <person name="Sockett R.E."/>
            <person name="Schuster S.C."/>
        </authorList>
    </citation>
    <scope>NUCLEOTIDE SEQUENCE [LARGE SCALE GENOMIC DNA]</scope>
    <source>
        <strain>ATCC 15356 / DSM 50701 / NCIMB 9529 / HD100</strain>
    </source>
</reference>
<organism>
    <name type="scientific">Bdellovibrio bacteriovorus (strain ATCC 15356 / DSM 50701 / NCIMB 9529 / HD100)</name>
    <dbReference type="NCBI Taxonomy" id="264462"/>
    <lineage>
        <taxon>Bacteria</taxon>
        <taxon>Pseudomonadati</taxon>
        <taxon>Bdellovibrionota</taxon>
        <taxon>Bdellovibrionia</taxon>
        <taxon>Bdellovibrionales</taxon>
        <taxon>Pseudobdellovibrionaceae</taxon>
        <taxon>Bdellovibrio</taxon>
    </lineage>
</organism>